<organism>
    <name type="scientific">Bordetella parapertussis (strain 12822 / ATCC BAA-587 / NCTC 13253)</name>
    <dbReference type="NCBI Taxonomy" id="257311"/>
    <lineage>
        <taxon>Bacteria</taxon>
        <taxon>Pseudomonadati</taxon>
        <taxon>Pseudomonadota</taxon>
        <taxon>Betaproteobacteria</taxon>
        <taxon>Burkholderiales</taxon>
        <taxon>Alcaligenaceae</taxon>
        <taxon>Bordetella</taxon>
    </lineage>
</organism>
<accession>Q7W2E7</accession>
<reference key="1">
    <citation type="journal article" date="2003" name="Nat. Genet.">
        <title>Comparative analysis of the genome sequences of Bordetella pertussis, Bordetella parapertussis and Bordetella bronchiseptica.</title>
        <authorList>
            <person name="Parkhill J."/>
            <person name="Sebaihia M."/>
            <person name="Preston A."/>
            <person name="Murphy L.D."/>
            <person name="Thomson N.R."/>
            <person name="Harris D.E."/>
            <person name="Holden M.T.G."/>
            <person name="Churcher C.M."/>
            <person name="Bentley S.D."/>
            <person name="Mungall K.L."/>
            <person name="Cerdeno-Tarraga A.-M."/>
            <person name="Temple L."/>
            <person name="James K.D."/>
            <person name="Harris B."/>
            <person name="Quail M.A."/>
            <person name="Achtman M."/>
            <person name="Atkin R."/>
            <person name="Baker S."/>
            <person name="Basham D."/>
            <person name="Bason N."/>
            <person name="Cherevach I."/>
            <person name="Chillingworth T."/>
            <person name="Collins M."/>
            <person name="Cronin A."/>
            <person name="Davis P."/>
            <person name="Doggett J."/>
            <person name="Feltwell T."/>
            <person name="Goble A."/>
            <person name="Hamlin N."/>
            <person name="Hauser H."/>
            <person name="Holroyd S."/>
            <person name="Jagels K."/>
            <person name="Leather S."/>
            <person name="Moule S."/>
            <person name="Norberczak H."/>
            <person name="O'Neil S."/>
            <person name="Ormond D."/>
            <person name="Price C."/>
            <person name="Rabbinowitsch E."/>
            <person name="Rutter S."/>
            <person name="Sanders M."/>
            <person name="Saunders D."/>
            <person name="Seeger K."/>
            <person name="Sharp S."/>
            <person name="Simmonds M."/>
            <person name="Skelton J."/>
            <person name="Squares R."/>
            <person name="Squares S."/>
            <person name="Stevens K."/>
            <person name="Unwin L."/>
            <person name="Whitehead S."/>
            <person name="Barrell B.G."/>
            <person name="Maskell D.J."/>
        </authorList>
    </citation>
    <scope>NUCLEOTIDE SEQUENCE [LARGE SCALE GENOMIC DNA]</scope>
    <source>
        <strain>12822 / ATCC BAA-587 / NCTC 13253</strain>
    </source>
</reference>
<evidence type="ECO:0000255" key="1">
    <source>
        <dbReference type="HAMAP-Rule" id="MF_01345"/>
    </source>
</evidence>
<evidence type="ECO:0000305" key="2"/>
<protein>
    <recommendedName>
        <fullName evidence="1">Small ribosomal subunit protein uS17</fullName>
    </recommendedName>
    <alternativeName>
        <fullName evidence="2">30S ribosomal protein S17</fullName>
    </alternativeName>
</protein>
<name>RS17_BORPA</name>
<feature type="chain" id="PRO_0000233437" description="Small ribosomal subunit protein uS17">
    <location>
        <begin position="1"/>
        <end position="93"/>
    </location>
</feature>
<gene>
    <name evidence="1" type="primary">rpsQ</name>
    <name type="ordered locus">BPP0038</name>
</gene>
<comment type="function">
    <text evidence="1">One of the primary rRNA binding proteins, it binds specifically to the 5'-end of 16S ribosomal RNA.</text>
</comment>
<comment type="subunit">
    <text evidence="1">Part of the 30S ribosomal subunit.</text>
</comment>
<comment type="similarity">
    <text evidence="1">Belongs to the universal ribosomal protein uS17 family.</text>
</comment>
<proteinExistence type="inferred from homology"/>
<keyword id="KW-0687">Ribonucleoprotein</keyword>
<keyword id="KW-0689">Ribosomal protein</keyword>
<keyword id="KW-0694">RNA-binding</keyword>
<keyword id="KW-0699">rRNA-binding</keyword>
<dbReference type="EMBL" id="BX640423">
    <property type="protein sequence ID" value="CAE39779.1"/>
    <property type="molecule type" value="Genomic_DNA"/>
</dbReference>
<dbReference type="RefSeq" id="WP_003806913.1">
    <property type="nucleotide sequence ID" value="NC_002928.3"/>
</dbReference>
<dbReference type="SMR" id="Q7W2E7"/>
<dbReference type="GeneID" id="93206267"/>
<dbReference type="KEGG" id="bpa:BPP0038"/>
<dbReference type="HOGENOM" id="CLU_073626_1_1_4"/>
<dbReference type="Proteomes" id="UP000001421">
    <property type="component" value="Chromosome"/>
</dbReference>
<dbReference type="GO" id="GO:0022627">
    <property type="term" value="C:cytosolic small ribosomal subunit"/>
    <property type="evidence" value="ECO:0007669"/>
    <property type="project" value="TreeGrafter"/>
</dbReference>
<dbReference type="GO" id="GO:0019843">
    <property type="term" value="F:rRNA binding"/>
    <property type="evidence" value="ECO:0007669"/>
    <property type="project" value="UniProtKB-UniRule"/>
</dbReference>
<dbReference type="GO" id="GO:0003735">
    <property type="term" value="F:structural constituent of ribosome"/>
    <property type="evidence" value="ECO:0007669"/>
    <property type="project" value="InterPro"/>
</dbReference>
<dbReference type="GO" id="GO:0006412">
    <property type="term" value="P:translation"/>
    <property type="evidence" value="ECO:0007669"/>
    <property type="project" value="UniProtKB-UniRule"/>
</dbReference>
<dbReference type="CDD" id="cd00364">
    <property type="entry name" value="Ribosomal_uS17"/>
    <property type="match status" value="1"/>
</dbReference>
<dbReference type="Gene3D" id="2.40.50.140">
    <property type="entry name" value="Nucleic acid-binding proteins"/>
    <property type="match status" value="1"/>
</dbReference>
<dbReference type="HAMAP" id="MF_01345_B">
    <property type="entry name" value="Ribosomal_uS17_B"/>
    <property type="match status" value="1"/>
</dbReference>
<dbReference type="InterPro" id="IPR012340">
    <property type="entry name" value="NA-bd_OB-fold"/>
</dbReference>
<dbReference type="InterPro" id="IPR000266">
    <property type="entry name" value="Ribosomal_uS17"/>
</dbReference>
<dbReference type="InterPro" id="IPR019984">
    <property type="entry name" value="Ribosomal_uS17_bact/chlr"/>
</dbReference>
<dbReference type="InterPro" id="IPR019979">
    <property type="entry name" value="Ribosomal_uS17_CS"/>
</dbReference>
<dbReference type="NCBIfam" id="NF004123">
    <property type="entry name" value="PRK05610.1"/>
    <property type="match status" value="1"/>
</dbReference>
<dbReference type="NCBIfam" id="TIGR03635">
    <property type="entry name" value="uS17_bact"/>
    <property type="match status" value="1"/>
</dbReference>
<dbReference type="PANTHER" id="PTHR10744">
    <property type="entry name" value="40S RIBOSOMAL PROTEIN S11 FAMILY MEMBER"/>
    <property type="match status" value="1"/>
</dbReference>
<dbReference type="PANTHER" id="PTHR10744:SF1">
    <property type="entry name" value="SMALL RIBOSOMAL SUBUNIT PROTEIN US17M"/>
    <property type="match status" value="1"/>
</dbReference>
<dbReference type="Pfam" id="PF00366">
    <property type="entry name" value="Ribosomal_S17"/>
    <property type="match status" value="1"/>
</dbReference>
<dbReference type="PRINTS" id="PR00973">
    <property type="entry name" value="RIBOSOMALS17"/>
</dbReference>
<dbReference type="SUPFAM" id="SSF50249">
    <property type="entry name" value="Nucleic acid-binding proteins"/>
    <property type="match status" value="1"/>
</dbReference>
<dbReference type="PROSITE" id="PS00056">
    <property type="entry name" value="RIBOSOMAL_S17"/>
    <property type="match status" value="1"/>
</dbReference>
<sequence length="93" mass="10633">MSETQNTQVAKRQRTLVGKVVSNKMDKTVVVLVERRVKHPIFGKIIMRSAKYKAHDESNQYNEGDTVEIAEGRPISRSKAWRVVRLVEAARVI</sequence>